<name>ECO1_KLULA</name>
<evidence type="ECO:0000250" key="1"/>
<evidence type="ECO:0000255" key="2">
    <source>
        <dbReference type="PROSITE-ProRule" id="PRU00532"/>
    </source>
</evidence>
<evidence type="ECO:0000305" key="3"/>
<keyword id="KW-0012">Acyltransferase</keyword>
<keyword id="KW-0131">Cell cycle</keyword>
<keyword id="KW-0479">Metal-binding</keyword>
<keyword id="KW-0539">Nucleus</keyword>
<keyword id="KW-1185">Reference proteome</keyword>
<keyword id="KW-0808">Transferase</keyword>
<keyword id="KW-0862">Zinc</keyword>
<keyword id="KW-0863">Zinc-finger</keyword>
<dbReference type="EC" id="2.3.1.-"/>
<dbReference type="EMBL" id="CR382122">
    <property type="protein sequence ID" value="CAH02222.1"/>
    <property type="molecule type" value="Genomic_DNA"/>
</dbReference>
<dbReference type="RefSeq" id="XP_451829.1">
    <property type="nucleotide sequence ID" value="XM_451829.1"/>
</dbReference>
<dbReference type="SMR" id="Q6CW60"/>
<dbReference type="FunCoup" id="Q6CW60">
    <property type="interactions" value="43"/>
</dbReference>
<dbReference type="STRING" id="284590.Q6CW60"/>
<dbReference type="PaxDb" id="284590-Q6CW60"/>
<dbReference type="KEGG" id="kla:KLLA0_B06644g"/>
<dbReference type="eggNOG" id="KOG3014">
    <property type="taxonomic scope" value="Eukaryota"/>
</dbReference>
<dbReference type="HOGENOM" id="CLU_039183_2_1_1"/>
<dbReference type="InParanoid" id="Q6CW60"/>
<dbReference type="OMA" id="PSITHQE"/>
<dbReference type="Proteomes" id="UP000000598">
    <property type="component" value="Chromosome B"/>
</dbReference>
<dbReference type="GO" id="GO:0000785">
    <property type="term" value="C:chromatin"/>
    <property type="evidence" value="ECO:0007669"/>
    <property type="project" value="TreeGrafter"/>
</dbReference>
<dbReference type="GO" id="GO:0005634">
    <property type="term" value="C:nucleus"/>
    <property type="evidence" value="ECO:0007669"/>
    <property type="project" value="UniProtKB-SubCell"/>
</dbReference>
<dbReference type="GO" id="GO:0061733">
    <property type="term" value="F:protein-lysine-acetyltransferase activity"/>
    <property type="evidence" value="ECO:0007669"/>
    <property type="project" value="TreeGrafter"/>
</dbReference>
<dbReference type="GO" id="GO:0008270">
    <property type="term" value="F:zinc ion binding"/>
    <property type="evidence" value="ECO:0007669"/>
    <property type="project" value="UniProtKB-KW"/>
</dbReference>
<dbReference type="GO" id="GO:0007064">
    <property type="term" value="P:mitotic sister chromatid cohesion"/>
    <property type="evidence" value="ECO:0007669"/>
    <property type="project" value="TreeGrafter"/>
</dbReference>
<dbReference type="Gene3D" id="3.40.630.30">
    <property type="match status" value="1"/>
</dbReference>
<dbReference type="InterPro" id="IPR028005">
    <property type="entry name" value="AcTrfase_ESCO_Znf_dom"/>
</dbReference>
<dbReference type="InterPro" id="IPR016181">
    <property type="entry name" value="Acyl_CoA_acyltransferase"/>
</dbReference>
<dbReference type="InterPro" id="IPR028009">
    <property type="entry name" value="ESCO_Acetyltransf_dom"/>
</dbReference>
<dbReference type="InterPro" id="IPR000182">
    <property type="entry name" value="GNAT_dom"/>
</dbReference>
<dbReference type="PANTHER" id="PTHR45884">
    <property type="entry name" value="N-ACETYLTRANSFERASE ECO"/>
    <property type="match status" value="1"/>
</dbReference>
<dbReference type="PANTHER" id="PTHR45884:SF2">
    <property type="entry name" value="N-ACETYLTRANSFERASE ECO"/>
    <property type="match status" value="1"/>
</dbReference>
<dbReference type="Pfam" id="PF13880">
    <property type="entry name" value="Acetyltransf_13"/>
    <property type="match status" value="1"/>
</dbReference>
<dbReference type="Pfam" id="PF13878">
    <property type="entry name" value="zf-C2H2_3"/>
    <property type="match status" value="1"/>
</dbReference>
<dbReference type="SUPFAM" id="SSF55729">
    <property type="entry name" value="Acyl-CoA N-acyltransferases (Nat)"/>
    <property type="match status" value="1"/>
</dbReference>
<dbReference type="PROSITE" id="PS51186">
    <property type="entry name" value="GNAT"/>
    <property type="match status" value="1"/>
</dbReference>
<reference key="1">
    <citation type="journal article" date="2004" name="Nature">
        <title>Genome evolution in yeasts.</title>
        <authorList>
            <person name="Dujon B."/>
            <person name="Sherman D."/>
            <person name="Fischer G."/>
            <person name="Durrens P."/>
            <person name="Casaregola S."/>
            <person name="Lafontaine I."/>
            <person name="de Montigny J."/>
            <person name="Marck C."/>
            <person name="Neuveglise C."/>
            <person name="Talla E."/>
            <person name="Goffard N."/>
            <person name="Frangeul L."/>
            <person name="Aigle M."/>
            <person name="Anthouard V."/>
            <person name="Babour A."/>
            <person name="Barbe V."/>
            <person name="Barnay S."/>
            <person name="Blanchin S."/>
            <person name="Beckerich J.-M."/>
            <person name="Beyne E."/>
            <person name="Bleykasten C."/>
            <person name="Boisrame A."/>
            <person name="Boyer J."/>
            <person name="Cattolico L."/>
            <person name="Confanioleri F."/>
            <person name="de Daruvar A."/>
            <person name="Despons L."/>
            <person name="Fabre E."/>
            <person name="Fairhead C."/>
            <person name="Ferry-Dumazet H."/>
            <person name="Groppi A."/>
            <person name="Hantraye F."/>
            <person name="Hennequin C."/>
            <person name="Jauniaux N."/>
            <person name="Joyet P."/>
            <person name="Kachouri R."/>
            <person name="Kerrest A."/>
            <person name="Koszul R."/>
            <person name="Lemaire M."/>
            <person name="Lesur I."/>
            <person name="Ma L."/>
            <person name="Muller H."/>
            <person name="Nicaud J.-M."/>
            <person name="Nikolski M."/>
            <person name="Oztas S."/>
            <person name="Ozier-Kalogeropoulos O."/>
            <person name="Pellenz S."/>
            <person name="Potier S."/>
            <person name="Richard G.-F."/>
            <person name="Straub M.-L."/>
            <person name="Suleau A."/>
            <person name="Swennen D."/>
            <person name="Tekaia F."/>
            <person name="Wesolowski-Louvel M."/>
            <person name="Westhof E."/>
            <person name="Wirth B."/>
            <person name="Zeniou-Meyer M."/>
            <person name="Zivanovic Y."/>
            <person name="Bolotin-Fukuhara M."/>
            <person name="Thierry A."/>
            <person name="Bouchier C."/>
            <person name="Caudron B."/>
            <person name="Scarpelli C."/>
            <person name="Gaillardin C."/>
            <person name="Weissenbach J."/>
            <person name="Wincker P."/>
            <person name="Souciet J.-L."/>
        </authorList>
    </citation>
    <scope>NUCLEOTIDE SEQUENCE [LARGE SCALE GENOMIC DNA]</scope>
    <source>
        <strain>ATCC 8585 / CBS 2359 / DSM 70799 / NBRC 1267 / NRRL Y-1140 / WM37</strain>
    </source>
</reference>
<organism>
    <name type="scientific">Kluyveromyces lactis (strain ATCC 8585 / CBS 2359 / DSM 70799 / NBRC 1267 / NRRL Y-1140 / WM37)</name>
    <name type="common">Yeast</name>
    <name type="synonym">Candida sphaerica</name>
    <dbReference type="NCBI Taxonomy" id="284590"/>
    <lineage>
        <taxon>Eukaryota</taxon>
        <taxon>Fungi</taxon>
        <taxon>Dikarya</taxon>
        <taxon>Ascomycota</taxon>
        <taxon>Saccharomycotina</taxon>
        <taxon>Saccharomycetes</taxon>
        <taxon>Saccharomycetales</taxon>
        <taxon>Saccharomycetaceae</taxon>
        <taxon>Kluyveromyces</taxon>
    </lineage>
</organism>
<protein>
    <recommendedName>
        <fullName>N-acetyltransferase ECO1</fullName>
        <ecNumber>2.3.1.-</ecNumber>
    </recommendedName>
    <alternativeName>
        <fullName>Establishment of cohesion protein 1</fullName>
    </alternativeName>
</protein>
<feature type="chain" id="PRO_0000074548" description="N-acetyltransferase ECO1">
    <location>
        <begin position="1"/>
        <end position="271"/>
    </location>
</feature>
<feature type="domain" description="N-acetyltransferase" evidence="2">
    <location>
        <begin position="109"/>
        <end position="271"/>
    </location>
</feature>
<feature type="zinc finger region" description="CCHH-type">
    <location>
        <begin position="26"/>
        <end position="50"/>
    </location>
</feature>
<comment type="function">
    <text evidence="1">Probable acetyltransferase required for the establishment of sister chromatid cohesion and couple the processes of cohesion and DNA replication to ensure that only sister chromatids become paired together. In contrast to the structural cohesins, the deposition and establishment factors are required only during S phase. Acts by acetylating the cohesin complex component SMC3 (By similarity).</text>
</comment>
<comment type="subcellular location">
    <subcellularLocation>
        <location evidence="1">Nucleus</location>
    </subcellularLocation>
</comment>
<comment type="similarity">
    <text evidence="3">Belongs to the acetyltransferase family. ECO subfamily.</text>
</comment>
<accession>Q6CW60</accession>
<proteinExistence type="inferred from homology"/>
<sequence length="271" mass="30936">MSKYRSPKTKKSIQATLQFKSTPTLVKCPKCSITYSTNSPSDLVQHKRYHDLHLNGKRWSQSWGDIINRVEALKTEKQLKYSMVSEKDKKVMSFQLPSQTLYEEDEYIVMISPKKANEVKAALDLMSIVNEELNAPHDENAFWSEVDKSGKSQGKAFIYVKKNRAVGVITIEYIENTNRGKWMVLDTKAIVPNVVPDVKLGISRIWVCRNQRQHGIATRLLEVARKKSIYGCIVNKWELAWSQPSQSGSILAKSYNAAKHRSGKLLIPCYI</sequence>
<gene>
    <name type="primary">ECO1</name>
    <name type="ordered locus">KLLA0B06644g</name>
</gene>